<keyword id="KW-1003">Cell membrane</keyword>
<keyword id="KW-0472">Membrane</keyword>
<keyword id="KW-1185">Reference proteome</keyword>
<keyword id="KW-0812">Transmembrane</keyword>
<keyword id="KW-1133">Transmembrane helix</keyword>
<accession>P0DJ98</accession>
<protein>
    <recommendedName>
        <fullName>Putative membrane protein Bcell_0381</fullName>
    </recommendedName>
</protein>
<feature type="chain" id="PRO_0000414220" description="Putative membrane protein Bcell_0381">
    <location>
        <begin position="1"/>
        <end position="664"/>
    </location>
</feature>
<feature type="transmembrane region" description="Helical" evidence="1">
    <location>
        <begin position="636"/>
        <end position="656"/>
    </location>
</feature>
<feature type="region of interest" description="Disordered" evidence="2">
    <location>
        <begin position="588"/>
        <end position="622"/>
    </location>
</feature>
<feature type="compositionally biased region" description="Acidic residues" evidence="2">
    <location>
        <begin position="588"/>
        <end position="616"/>
    </location>
</feature>
<name>Y381_EVAC2</name>
<evidence type="ECO:0000255" key="1"/>
<evidence type="ECO:0000256" key="2">
    <source>
        <dbReference type="SAM" id="MobiDB-lite"/>
    </source>
</evidence>
<evidence type="ECO:0000305" key="3"/>
<sequence>MTLYAKWEINVYTVSFATNGGSKVSEVDAEFASLIEEPTPPEKEGHSFKGWYQDELLTEAWDFEVETITENITLYAKWEINVYTVSFESNGGSQVSEVEAEYGSSITEPVPPEKEGHSFLGWYQDELLTEAWDFETSTVSEDMILYAKWEINEYTVSFELNGGSHVSEVEAEYGSTITEPAPPEKEGHSFLGWYQDELHTEAWDFETDVISENMTLYAQWSINNYDVHYDGNDYDSGEAPLTEAFAYDSEVTVAGQHTLGRNGYTFIGWNTERDGSGDQFEPGDTYRMGSEPLTLYAQWASNNAKLSELVISHGTLTPIFEADYAHYAVEVGHQVTSITITPTLQDTRSTVSISQNEAASGEVSSAIPLEEGLNTIIIDITAEDGSTYAYTVDVMRKVTDQFAQLTRESHFVTLDDEQIHMLDEEGTLRVDLQGELDDVTEVKFTQYQVQLLQEKGAFVQVVKEDLLVYIPFINFEPVKDLNITIQRQDYNIDTFAFADRSASAIYQLNIDQNGERISVFEHDIQLSFPVKNIGETNLEELQVYYFNPDGQEWELIGGTYNNGYIHATTSHFSTFAVFHPDHLSVEDDVTQDENGEEKSEEDNKEEIVEENTEEDNKEEKTIEAGEELPLTATRTYQFLLAGIIMLVGGSCIYVFYRRRNIMKT</sequence>
<reference key="1">
    <citation type="submission" date="2010-12" db="EMBL/GenBank/DDBJ databases">
        <title>Complete sequence of Bacillus cellulosilyticus DSM 2522.</title>
        <authorList>
            <person name="Lucas S."/>
            <person name="Copeland A."/>
            <person name="Lapidus A."/>
            <person name="Cheng J.-F."/>
            <person name="Bruce D."/>
            <person name="Goodwin L."/>
            <person name="Pitluck S."/>
            <person name="Chertkov O."/>
            <person name="Detter J.C."/>
            <person name="Han C."/>
            <person name="Tapia R."/>
            <person name="Land M."/>
            <person name="Hauser L."/>
            <person name="Jeffries C."/>
            <person name="Kyrpides N."/>
            <person name="Ivanova N."/>
            <person name="Mikhailova N."/>
            <person name="Brumm P."/>
            <person name="Mead D."/>
            <person name="Woyke T."/>
        </authorList>
    </citation>
    <scope>NUCLEOTIDE SEQUENCE [LARGE SCALE GENOMIC DNA]</scope>
    <source>
        <strain>ATCC 21833 / DSM 2522 / FERM P-1141 / JCM 9156 / N-4</strain>
    </source>
</reference>
<dbReference type="EMBL" id="CP002394">
    <property type="status" value="NOT_ANNOTATED_CDS"/>
    <property type="molecule type" value="Genomic_DNA"/>
</dbReference>
<dbReference type="SMR" id="P0DJ98"/>
<dbReference type="Proteomes" id="UP000001401">
    <property type="component" value="Chromosome"/>
</dbReference>
<dbReference type="GO" id="GO:0005886">
    <property type="term" value="C:plasma membrane"/>
    <property type="evidence" value="ECO:0007669"/>
    <property type="project" value="UniProtKB-SubCell"/>
</dbReference>
<dbReference type="Gene3D" id="2.60.40.4270">
    <property type="entry name" value="Listeria-Bacteroides repeat domain"/>
    <property type="match status" value="4"/>
</dbReference>
<dbReference type="InterPro" id="IPR025883">
    <property type="entry name" value="Cadherin-like_b_sandwich"/>
</dbReference>
<dbReference type="InterPro" id="IPR013378">
    <property type="entry name" value="InlB-like_B-rpt"/>
</dbReference>
<dbReference type="InterPro" id="IPR042229">
    <property type="entry name" value="Listeria/Bacterioides_rpt_sf"/>
</dbReference>
<dbReference type="NCBIfam" id="TIGR02543">
    <property type="entry name" value="List_Bact_rpt"/>
    <property type="match status" value="4"/>
</dbReference>
<dbReference type="Pfam" id="PF12733">
    <property type="entry name" value="Cadherin-like"/>
    <property type="match status" value="1"/>
</dbReference>
<dbReference type="Pfam" id="PF09479">
    <property type="entry name" value="Flg_new"/>
    <property type="match status" value="4"/>
</dbReference>
<proteinExistence type="predicted"/>
<gene>
    <name type="ordered locus">Bcell_0381</name>
</gene>
<comment type="subcellular location">
    <subcellularLocation>
        <location evidence="3">Cell membrane</location>
        <topology evidence="3">Single-pass membrane protein</topology>
    </subcellularLocation>
</comment>
<organism>
    <name type="scientific">Evansella cellulosilytica (strain ATCC 21833 / DSM 2522 / FERM P-1141 / JCM 9156 / N-4)</name>
    <name type="common">Bacillus cellulosilyticus</name>
    <dbReference type="NCBI Taxonomy" id="649639"/>
    <lineage>
        <taxon>Bacteria</taxon>
        <taxon>Bacillati</taxon>
        <taxon>Bacillota</taxon>
        <taxon>Bacilli</taxon>
        <taxon>Bacillales</taxon>
        <taxon>Bacillaceae</taxon>
        <taxon>Evansella</taxon>
    </lineage>
</organism>